<organism>
    <name type="scientific">Homo sapiens</name>
    <name type="common">Human</name>
    <dbReference type="NCBI Taxonomy" id="9606"/>
    <lineage>
        <taxon>Eukaryota</taxon>
        <taxon>Metazoa</taxon>
        <taxon>Chordata</taxon>
        <taxon>Craniata</taxon>
        <taxon>Vertebrata</taxon>
        <taxon>Euteleostomi</taxon>
        <taxon>Mammalia</taxon>
        <taxon>Eutheria</taxon>
        <taxon>Euarchontoglires</taxon>
        <taxon>Primates</taxon>
        <taxon>Haplorrhini</taxon>
        <taxon>Catarrhini</taxon>
        <taxon>Hominidae</taxon>
        <taxon>Homo</taxon>
    </lineage>
</organism>
<comment type="function">
    <text evidence="3">Mitochondrial membrane carrier protein that mediates the import of NAD(+) into mitochondria (PubMed:32906142). Compared to SLC25A51, SLC25A52-mediated transport is not essential for the import of NAD(+) in mitochondria (PubMed:32906142). The transport mechanism, uniport or antiport, its electrogenicity and substrate selectivity, remain to be elucidated.</text>
</comment>
<comment type="catalytic activity">
    <reaction evidence="6">
        <text>NAD(+)(in) = NAD(+)(out)</text>
        <dbReference type="Rhea" id="RHEA:65408"/>
        <dbReference type="ChEBI" id="CHEBI:57540"/>
    </reaction>
</comment>
<comment type="subcellular location">
    <subcellularLocation>
        <location evidence="6">Mitochondrion inner membrane</location>
        <topology evidence="1">Multi-pass membrane protein</topology>
    </subcellularLocation>
</comment>
<comment type="similarity">
    <text evidence="5">Belongs to the mitochondrial carrier (TC 2.A.29) family.</text>
</comment>
<sequence>MIDSEAHEKRPPILTSSKQDISPHITNVGEMKHYLCGCCAAFNNVAITYPIQKVLFRQQLYGIKTRDAVLQLRRDGFRNLYRGILPPLMQKTTTLALMFGLYEDLSCLLRKHVRAPEFATHGVAAVLAGTAEAIFTPLERVQTLLQNHKHHDKFTNTYQAFKALKCHGIGEYYRGLVPILFRNGLSNVLFFGLRGPIKEHLPTATTHSAHLVNDFIGGGLLGAMLGFLCFPINVVKTRLQSQIGGEFQSFPKVFQKIWLERDRKLINLFRGAHLNYHRSLISWGIINATYEFLLKFI</sequence>
<name>S2552_HUMAN</name>
<evidence type="ECO:0000255" key="1"/>
<evidence type="ECO:0000269" key="2">
    <source>
    </source>
</evidence>
<evidence type="ECO:0000269" key="3">
    <source>
    </source>
</evidence>
<evidence type="ECO:0000303" key="4">
    <source>
    </source>
</evidence>
<evidence type="ECO:0000305" key="5"/>
<evidence type="ECO:0000305" key="6">
    <source>
    </source>
</evidence>
<evidence type="ECO:0000312" key="7">
    <source>
        <dbReference type="HGNC" id="HGNC:23324"/>
    </source>
</evidence>
<dbReference type="EMBL" id="AC022960">
    <property type="status" value="NOT_ANNOTATED_CDS"/>
    <property type="molecule type" value="Genomic_DNA"/>
</dbReference>
<dbReference type="EMBL" id="BC103999">
    <property type="protein sequence ID" value="AAI04000.1"/>
    <property type="molecule type" value="mRNA"/>
</dbReference>
<dbReference type="EMBL" id="BC104000">
    <property type="protein sequence ID" value="AAI04001.1"/>
    <property type="molecule type" value="mRNA"/>
</dbReference>
<dbReference type="EMBL" id="BC104001">
    <property type="protein sequence ID" value="AAI04002.1"/>
    <property type="molecule type" value="mRNA"/>
</dbReference>
<dbReference type="CCDS" id="CCDS32812.3"/>
<dbReference type="RefSeq" id="NP_001029344.4">
    <property type="nucleotide sequence ID" value="NM_001034172.4"/>
</dbReference>
<dbReference type="SMR" id="Q3SY17"/>
<dbReference type="BioGRID" id="127058">
    <property type="interactions" value="10"/>
</dbReference>
<dbReference type="FunCoup" id="Q3SY17">
    <property type="interactions" value="354"/>
</dbReference>
<dbReference type="IntAct" id="Q3SY17">
    <property type="interactions" value="7"/>
</dbReference>
<dbReference type="STRING" id="9606.ENSP00000500333"/>
<dbReference type="TCDB" id="2.A.29.2.12">
    <property type="family name" value="the mitochondrial carrier (mc) family"/>
</dbReference>
<dbReference type="iPTMnet" id="Q3SY17"/>
<dbReference type="PhosphoSitePlus" id="Q3SY17"/>
<dbReference type="BioMuta" id="SLC25A52"/>
<dbReference type="DMDM" id="296436436"/>
<dbReference type="jPOST" id="Q3SY17"/>
<dbReference type="MassIVE" id="Q3SY17"/>
<dbReference type="PaxDb" id="9606-ENSP00000372612"/>
<dbReference type="PeptideAtlas" id="Q3SY17"/>
<dbReference type="ProteomicsDB" id="61835"/>
<dbReference type="Pumba" id="Q3SY17"/>
<dbReference type="Antibodypedia" id="54450">
    <property type="antibodies" value="82 antibodies from 15 providers"/>
</dbReference>
<dbReference type="DNASU" id="147407"/>
<dbReference type="Ensembl" id="ENST00000269205.7">
    <property type="protein sequence ID" value="ENSP00000372612.4"/>
    <property type="gene ID" value="ENSG00000141437.10"/>
</dbReference>
<dbReference type="GeneID" id="147407"/>
<dbReference type="KEGG" id="hsa:147407"/>
<dbReference type="MANE-Select" id="ENST00000269205.7">
    <property type="protein sequence ID" value="ENSP00000372612.4"/>
    <property type="RefSeq nucleotide sequence ID" value="NM_001034172.4"/>
    <property type="RefSeq protein sequence ID" value="NP_001029344.4"/>
</dbReference>
<dbReference type="AGR" id="HGNC:23324"/>
<dbReference type="CTD" id="147407"/>
<dbReference type="DisGeNET" id="147407"/>
<dbReference type="GeneCards" id="SLC25A52"/>
<dbReference type="HGNC" id="HGNC:23324">
    <property type="gene designation" value="SLC25A52"/>
</dbReference>
<dbReference type="HPA" id="ENSG00000141437">
    <property type="expression patterns" value="Tissue enriched (testis)"/>
</dbReference>
<dbReference type="MIM" id="616153">
    <property type="type" value="gene"/>
</dbReference>
<dbReference type="neXtProt" id="NX_Q3SY17"/>
<dbReference type="OpenTargets" id="ENSG00000141437"/>
<dbReference type="PharmGKB" id="PA25306"/>
<dbReference type="VEuPathDB" id="HostDB:ENSG00000141437"/>
<dbReference type="eggNOG" id="KOG1519">
    <property type="taxonomic scope" value="Eukaryota"/>
</dbReference>
<dbReference type="GeneTree" id="ENSGT00940000155622"/>
<dbReference type="InParanoid" id="Q3SY17"/>
<dbReference type="OrthoDB" id="2139348at2759"/>
<dbReference type="PAN-GO" id="Q3SY17">
    <property type="GO annotations" value="3 GO annotations based on evolutionary models"/>
</dbReference>
<dbReference type="PhylomeDB" id="Q3SY17"/>
<dbReference type="TreeFam" id="TF314192"/>
<dbReference type="PathwayCommons" id="Q3SY17"/>
<dbReference type="SignaLink" id="Q3SY17"/>
<dbReference type="BioGRID-ORCS" id="147407">
    <property type="hits" value="7 hits in 1063 CRISPR screens"/>
</dbReference>
<dbReference type="GenomeRNAi" id="147407"/>
<dbReference type="Pharos" id="Q3SY17">
    <property type="development level" value="Tdark"/>
</dbReference>
<dbReference type="PRO" id="PR:Q3SY17"/>
<dbReference type="Proteomes" id="UP000005640">
    <property type="component" value="Chromosome 18"/>
</dbReference>
<dbReference type="RNAct" id="Q3SY17">
    <property type="molecule type" value="protein"/>
</dbReference>
<dbReference type="Bgee" id="ENSG00000141437">
    <property type="expression patterns" value="Expressed in male germ line stem cell (sensu Vertebrata) in testis and 47 other cell types or tissues"/>
</dbReference>
<dbReference type="ExpressionAtlas" id="Q3SY17">
    <property type="expression patterns" value="baseline and differential"/>
</dbReference>
<dbReference type="GO" id="GO:0005743">
    <property type="term" value="C:mitochondrial inner membrane"/>
    <property type="evidence" value="ECO:0007669"/>
    <property type="project" value="UniProtKB-SubCell"/>
</dbReference>
<dbReference type="GO" id="GO:0005739">
    <property type="term" value="C:mitochondrion"/>
    <property type="evidence" value="ECO:0000314"/>
    <property type="project" value="UniProtKB"/>
</dbReference>
<dbReference type="GO" id="GO:0051724">
    <property type="term" value="F:NAD transmembrane transporter activity"/>
    <property type="evidence" value="ECO:0000314"/>
    <property type="project" value="UniProtKB"/>
</dbReference>
<dbReference type="GO" id="GO:1990549">
    <property type="term" value="P:mitochondrial NAD transmembrane transport"/>
    <property type="evidence" value="ECO:0000314"/>
    <property type="project" value="UniProtKB"/>
</dbReference>
<dbReference type="Gene3D" id="1.50.40.10">
    <property type="entry name" value="Mitochondrial carrier domain"/>
    <property type="match status" value="1"/>
</dbReference>
<dbReference type="InterPro" id="IPR052465">
    <property type="entry name" value="Mito_NAD+_Carrier"/>
</dbReference>
<dbReference type="InterPro" id="IPR018108">
    <property type="entry name" value="Mitochondrial_sb/sol_carrier"/>
</dbReference>
<dbReference type="InterPro" id="IPR023395">
    <property type="entry name" value="Mt_carrier_dom_sf"/>
</dbReference>
<dbReference type="PANTHER" id="PTHR46131:SF2">
    <property type="entry name" value="MITOCHONDRIAL NICOTINAMIDE ADENINE DINUCLEOTIDE TRANSPORTER SLC25A51-RELATED"/>
    <property type="match status" value="1"/>
</dbReference>
<dbReference type="PANTHER" id="PTHR46131">
    <property type="entry name" value="SD08549P"/>
    <property type="match status" value="1"/>
</dbReference>
<dbReference type="Pfam" id="PF00153">
    <property type="entry name" value="Mito_carr"/>
    <property type="match status" value="3"/>
</dbReference>
<dbReference type="SUPFAM" id="SSF103506">
    <property type="entry name" value="Mitochondrial carrier"/>
    <property type="match status" value="1"/>
</dbReference>
<dbReference type="PROSITE" id="PS50920">
    <property type="entry name" value="SOLCAR"/>
    <property type="match status" value="3"/>
</dbReference>
<keyword id="KW-0472">Membrane</keyword>
<keyword id="KW-0496">Mitochondrion</keyword>
<keyword id="KW-0999">Mitochondrion inner membrane</keyword>
<keyword id="KW-1267">Proteomics identification</keyword>
<keyword id="KW-1185">Reference proteome</keyword>
<keyword id="KW-0677">Repeat</keyword>
<keyword id="KW-0812">Transmembrane</keyword>
<keyword id="KW-1133">Transmembrane helix</keyword>
<keyword id="KW-0813">Transport</keyword>
<protein>
    <recommendedName>
        <fullName evidence="5">Mitochondrial nicotinamide adenine dinucleotide transporter SLC25A52</fullName>
    </recommendedName>
    <alternativeName>
        <fullName evidence="5">Mitochondrial NAD(+) transporter SLC25A52</fullName>
    </alternativeName>
    <alternativeName>
        <fullName evidence="5">Mitochondrial carrier triple repeat protein 2</fullName>
    </alternativeName>
    <alternativeName>
        <fullName evidence="4">Solute carrier family 25 member 52</fullName>
    </alternativeName>
</protein>
<proteinExistence type="evidence at protein level"/>
<accession>Q3SY17</accession>
<reference key="1">
    <citation type="journal article" date="2005" name="Nature">
        <title>DNA sequence and analysis of human chromosome 18.</title>
        <authorList>
            <person name="Nusbaum C."/>
            <person name="Zody M.C."/>
            <person name="Borowsky M.L."/>
            <person name="Kamal M."/>
            <person name="Kodira C.D."/>
            <person name="Taylor T.D."/>
            <person name="Whittaker C.A."/>
            <person name="Chang J.L."/>
            <person name="Cuomo C.A."/>
            <person name="Dewar K."/>
            <person name="FitzGerald M.G."/>
            <person name="Yang X."/>
            <person name="Abouelleil A."/>
            <person name="Allen N.R."/>
            <person name="Anderson S."/>
            <person name="Bloom T."/>
            <person name="Bugalter B."/>
            <person name="Butler J."/>
            <person name="Cook A."/>
            <person name="DeCaprio D."/>
            <person name="Engels R."/>
            <person name="Garber M."/>
            <person name="Gnirke A."/>
            <person name="Hafez N."/>
            <person name="Hall J.L."/>
            <person name="Norman C.H."/>
            <person name="Itoh T."/>
            <person name="Jaffe D.B."/>
            <person name="Kuroki Y."/>
            <person name="Lehoczky J."/>
            <person name="Lui A."/>
            <person name="Macdonald P."/>
            <person name="Mauceli E."/>
            <person name="Mikkelsen T.S."/>
            <person name="Naylor J.W."/>
            <person name="Nicol R."/>
            <person name="Nguyen C."/>
            <person name="Noguchi H."/>
            <person name="O'Leary S.B."/>
            <person name="Piqani B."/>
            <person name="Smith C.L."/>
            <person name="Talamas J.A."/>
            <person name="Topham K."/>
            <person name="Totoki Y."/>
            <person name="Toyoda A."/>
            <person name="Wain H.M."/>
            <person name="Young S.K."/>
            <person name="Zeng Q."/>
            <person name="Zimmer A.R."/>
            <person name="Fujiyama A."/>
            <person name="Hattori M."/>
            <person name="Birren B.W."/>
            <person name="Sakaki Y."/>
            <person name="Lander E.S."/>
        </authorList>
    </citation>
    <scope>NUCLEOTIDE SEQUENCE [LARGE SCALE GENOMIC DNA]</scope>
</reference>
<reference key="2">
    <citation type="journal article" date="2004" name="Genome Res.">
        <title>The status, quality, and expansion of the NIH full-length cDNA project: the Mammalian Gene Collection (MGC).</title>
        <authorList>
            <consortium name="The MGC Project Team"/>
        </authorList>
    </citation>
    <scope>NUCLEOTIDE SEQUENCE [LARGE SCALE MRNA]</scope>
    <scope>VARIANT ILE-239</scope>
</reference>
<reference key="3">
    <citation type="journal article" date="2020" name="Nature">
        <title>SLC25A51 is a mammalian mitochondrial NAD+ transporter.</title>
        <authorList>
            <person name="Luongo T.S."/>
            <person name="Eller J.M."/>
            <person name="Lu M.J."/>
            <person name="Niere M."/>
            <person name="Raith F."/>
            <person name="Perry C."/>
            <person name="Bornstein M.R."/>
            <person name="Oliphint P."/>
            <person name="Wang L."/>
            <person name="McReynolds M.R."/>
            <person name="Migaud M.E."/>
            <person name="Rabinowitz J.D."/>
            <person name="Johnson F.B."/>
            <person name="Johnsson K."/>
            <person name="Ziegler M."/>
            <person name="Cambronne X.A."/>
            <person name="Baur J.A."/>
        </authorList>
    </citation>
    <scope>FUNCTION</scope>
    <scope>TRANSPORTER ACTIVITY</scope>
    <scope>SUBCELLULAR LOCATION</scope>
</reference>
<gene>
    <name evidence="4 7" type="primary">SLC25A52</name>
    <name evidence="7" type="synonym">MCART2</name>
</gene>
<feature type="chain" id="PRO_0000271790" description="Mitochondrial nicotinamide adenine dinucleotide transporter SLC25A52">
    <location>
        <begin position="1"/>
        <end position="297"/>
    </location>
</feature>
<feature type="transmembrane region" description="Helical; Name=1" evidence="1">
    <location>
        <begin position="34"/>
        <end position="51"/>
    </location>
</feature>
<feature type="transmembrane region" description="Helical; Name=2" evidence="1">
    <location>
        <begin position="85"/>
        <end position="105"/>
    </location>
</feature>
<feature type="transmembrane region" description="Helical; Name=3" evidence="1">
    <location>
        <begin position="118"/>
        <end position="138"/>
    </location>
</feature>
<feature type="transmembrane region" description="Helical; Name=4" evidence="1">
    <location>
        <begin position="179"/>
        <end position="199"/>
    </location>
</feature>
<feature type="transmembrane region" description="Helical; Name=5" evidence="1">
    <location>
        <begin position="215"/>
        <end position="235"/>
    </location>
</feature>
<feature type="transmembrane region" description="Helical; Name=6" evidence="1">
    <location>
        <begin position="268"/>
        <end position="289"/>
    </location>
</feature>
<feature type="repeat" description="Solcar 1" evidence="1">
    <location>
        <begin position="28"/>
        <end position="108"/>
    </location>
</feature>
<feature type="repeat" description="Solcar 2" evidence="1">
    <location>
        <begin position="116"/>
        <end position="200"/>
    </location>
</feature>
<feature type="repeat" description="Solcar 3" evidence="1">
    <location>
        <begin position="209"/>
        <end position="296"/>
    </location>
</feature>
<feature type="sequence variant" id="VAR_060299" description="In dbSNP:rs3859364." evidence="2">
    <original>L</original>
    <variation>I</variation>
    <location>
        <position position="239"/>
    </location>
</feature>